<gene>
    <name type="ORF">SPAC30C2.03</name>
</gene>
<proteinExistence type="predicted"/>
<evidence type="ECO:0000269" key="1">
    <source>
    </source>
</evidence>
<sequence length="210" mass="24658">MTSNLKRNFEYLVQYIQPHLRPKSSHSISLGYLSKEKISQEEMQIIRATQKLARTKYMTLYCIPRAWLIPFHEFLNNRSYRFPKLDYSQTPIRLAIRSGKKSVHKSAVVRHHNTTRIRETFIDIIKALYVNEKHHYLPKQAIDVVIDSYNGGCVNLPPETLFYDMQRLWLTAMNTYENQKPPNLKLLLHDHGTVVSLGSDNVPLYRKLDS</sequence>
<comment type="subcellular location">
    <subcellularLocation>
        <location evidence="1">Mitochondrion</location>
    </subcellularLocation>
</comment>
<organism>
    <name type="scientific">Schizosaccharomyces pombe (strain 972 / ATCC 24843)</name>
    <name type="common">Fission yeast</name>
    <dbReference type="NCBI Taxonomy" id="284812"/>
    <lineage>
        <taxon>Eukaryota</taxon>
        <taxon>Fungi</taxon>
        <taxon>Dikarya</taxon>
        <taxon>Ascomycota</taxon>
        <taxon>Taphrinomycotina</taxon>
        <taxon>Schizosaccharomycetes</taxon>
        <taxon>Schizosaccharomycetales</taxon>
        <taxon>Schizosaccharomycetaceae</taxon>
        <taxon>Schizosaccharomyces</taxon>
    </lineage>
</organism>
<protein>
    <recommendedName>
        <fullName>Uncharacterized protein C30C2.03</fullName>
    </recommendedName>
</protein>
<name>YLF3_SCHPO</name>
<feature type="chain" id="PRO_0000304101" description="Uncharacterized protein C30C2.03">
    <location>
        <begin position="1"/>
        <end position="210"/>
    </location>
</feature>
<reference key="1">
    <citation type="journal article" date="2002" name="Nature">
        <title>The genome sequence of Schizosaccharomyces pombe.</title>
        <authorList>
            <person name="Wood V."/>
            <person name="Gwilliam R."/>
            <person name="Rajandream M.A."/>
            <person name="Lyne M.H."/>
            <person name="Lyne R."/>
            <person name="Stewart A."/>
            <person name="Sgouros J.G."/>
            <person name="Peat N."/>
            <person name="Hayles J."/>
            <person name="Baker S.G."/>
            <person name="Basham D."/>
            <person name="Bowman S."/>
            <person name="Brooks K."/>
            <person name="Brown D."/>
            <person name="Brown S."/>
            <person name="Chillingworth T."/>
            <person name="Churcher C.M."/>
            <person name="Collins M."/>
            <person name="Connor R."/>
            <person name="Cronin A."/>
            <person name="Davis P."/>
            <person name="Feltwell T."/>
            <person name="Fraser A."/>
            <person name="Gentles S."/>
            <person name="Goble A."/>
            <person name="Hamlin N."/>
            <person name="Harris D.E."/>
            <person name="Hidalgo J."/>
            <person name="Hodgson G."/>
            <person name="Holroyd S."/>
            <person name="Hornsby T."/>
            <person name="Howarth S."/>
            <person name="Huckle E.J."/>
            <person name="Hunt S."/>
            <person name="Jagels K."/>
            <person name="James K.D."/>
            <person name="Jones L."/>
            <person name="Jones M."/>
            <person name="Leather S."/>
            <person name="McDonald S."/>
            <person name="McLean J."/>
            <person name="Mooney P."/>
            <person name="Moule S."/>
            <person name="Mungall K.L."/>
            <person name="Murphy L.D."/>
            <person name="Niblett D."/>
            <person name="Odell C."/>
            <person name="Oliver K."/>
            <person name="O'Neil S."/>
            <person name="Pearson D."/>
            <person name="Quail M.A."/>
            <person name="Rabbinowitsch E."/>
            <person name="Rutherford K.M."/>
            <person name="Rutter S."/>
            <person name="Saunders D."/>
            <person name="Seeger K."/>
            <person name="Sharp S."/>
            <person name="Skelton J."/>
            <person name="Simmonds M.N."/>
            <person name="Squares R."/>
            <person name="Squares S."/>
            <person name="Stevens K."/>
            <person name="Taylor K."/>
            <person name="Taylor R.G."/>
            <person name="Tivey A."/>
            <person name="Walsh S.V."/>
            <person name="Warren T."/>
            <person name="Whitehead S."/>
            <person name="Woodward J.R."/>
            <person name="Volckaert G."/>
            <person name="Aert R."/>
            <person name="Robben J."/>
            <person name="Grymonprez B."/>
            <person name="Weltjens I."/>
            <person name="Vanstreels E."/>
            <person name="Rieger M."/>
            <person name="Schaefer M."/>
            <person name="Mueller-Auer S."/>
            <person name="Gabel C."/>
            <person name="Fuchs M."/>
            <person name="Duesterhoeft A."/>
            <person name="Fritzc C."/>
            <person name="Holzer E."/>
            <person name="Moestl D."/>
            <person name="Hilbert H."/>
            <person name="Borzym K."/>
            <person name="Langer I."/>
            <person name="Beck A."/>
            <person name="Lehrach H."/>
            <person name="Reinhardt R."/>
            <person name="Pohl T.M."/>
            <person name="Eger P."/>
            <person name="Zimmermann W."/>
            <person name="Wedler H."/>
            <person name="Wambutt R."/>
            <person name="Purnelle B."/>
            <person name="Goffeau A."/>
            <person name="Cadieu E."/>
            <person name="Dreano S."/>
            <person name="Gloux S."/>
            <person name="Lelaure V."/>
            <person name="Mottier S."/>
            <person name="Galibert F."/>
            <person name="Aves S.J."/>
            <person name="Xiang Z."/>
            <person name="Hunt C."/>
            <person name="Moore K."/>
            <person name="Hurst S.M."/>
            <person name="Lucas M."/>
            <person name="Rochet M."/>
            <person name="Gaillardin C."/>
            <person name="Tallada V.A."/>
            <person name="Garzon A."/>
            <person name="Thode G."/>
            <person name="Daga R.R."/>
            <person name="Cruzado L."/>
            <person name="Jimenez J."/>
            <person name="Sanchez M."/>
            <person name="del Rey F."/>
            <person name="Benito J."/>
            <person name="Dominguez A."/>
            <person name="Revuelta J.L."/>
            <person name="Moreno S."/>
            <person name="Armstrong J."/>
            <person name="Forsburg S.L."/>
            <person name="Cerutti L."/>
            <person name="Lowe T."/>
            <person name="McCombie W.R."/>
            <person name="Paulsen I."/>
            <person name="Potashkin J."/>
            <person name="Shpakovski G.V."/>
            <person name="Ussery D."/>
            <person name="Barrell B.G."/>
            <person name="Nurse P."/>
        </authorList>
    </citation>
    <scope>NUCLEOTIDE SEQUENCE [LARGE SCALE GENOMIC DNA]</scope>
    <source>
        <strain>972 / ATCC 24843</strain>
    </source>
</reference>
<reference key="2">
    <citation type="journal article" date="2006" name="Nat. Biotechnol.">
        <title>ORFeome cloning and global analysis of protein localization in the fission yeast Schizosaccharomyces pombe.</title>
        <authorList>
            <person name="Matsuyama A."/>
            <person name="Arai R."/>
            <person name="Yashiroda Y."/>
            <person name="Shirai A."/>
            <person name="Kamata A."/>
            <person name="Sekido S."/>
            <person name="Kobayashi Y."/>
            <person name="Hashimoto A."/>
            <person name="Hamamoto M."/>
            <person name="Hiraoka Y."/>
            <person name="Horinouchi S."/>
            <person name="Yoshida M."/>
        </authorList>
    </citation>
    <scope>SUBCELLULAR LOCATION [LARGE SCALE ANALYSIS]</scope>
</reference>
<keyword id="KW-0496">Mitochondrion</keyword>
<keyword id="KW-1185">Reference proteome</keyword>
<accession>Q9P6K8</accession>
<dbReference type="EMBL" id="CU329670">
    <property type="protein sequence ID" value="CAB90790.1"/>
    <property type="molecule type" value="Genomic_DNA"/>
</dbReference>
<dbReference type="RefSeq" id="NP_594655.1">
    <property type="nucleotide sequence ID" value="NM_001020084.2"/>
</dbReference>
<dbReference type="PaxDb" id="4896-SPAC30C2.03.1"/>
<dbReference type="EnsemblFungi" id="SPAC30C2.03.1">
    <property type="protein sequence ID" value="SPAC30C2.03.1:pep"/>
    <property type="gene ID" value="SPAC30C2.03"/>
</dbReference>
<dbReference type="KEGG" id="spo:2541703"/>
<dbReference type="PomBase" id="SPAC30C2.03"/>
<dbReference type="VEuPathDB" id="FungiDB:SPAC30C2.03"/>
<dbReference type="HOGENOM" id="CLU_1327067_0_0_1"/>
<dbReference type="InParanoid" id="Q9P6K8"/>
<dbReference type="OMA" id="PEEMQII"/>
<dbReference type="PRO" id="PR:Q9P6K8"/>
<dbReference type="Proteomes" id="UP000002485">
    <property type="component" value="Chromosome I"/>
</dbReference>
<dbReference type="GO" id="GO:0005739">
    <property type="term" value="C:mitochondrion"/>
    <property type="evidence" value="ECO:0007005"/>
    <property type="project" value="PomBase"/>
</dbReference>